<evidence type="ECO:0000250" key="1"/>
<evidence type="ECO:0000255" key="2"/>
<evidence type="ECO:0000255" key="3">
    <source>
        <dbReference type="PROSITE-ProRule" id="PRU00352"/>
    </source>
</evidence>
<evidence type="ECO:0000256" key="4">
    <source>
        <dbReference type="SAM" id="MobiDB-lite"/>
    </source>
</evidence>
<evidence type="ECO:0000303" key="5">
    <source>
    </source>
</evidence>
<evidence type="ECO:0000305" key="6"/>
<proteinExistence type="evidence at protein level"/>
<feature type="signal peptide" evidence="2">
    <location>
        <begin position="1"/>
        <end position="20"/>
    </location>
</feature>
<feature type="chain" id="PRO_0000032311" description="Semaphorin-3C">
    <location>
        <begin position="21"/>
        <end position="751"/>
    </location>
</feature>
<feature type="domain" description="Sema" evidence="3">
    <location>
        <begin position="28"/>
        <end position="511"/>
    </location>
</feature>
<feature type="domain" description="Ig-like C2-type">
    <location>
        <begin position="571"/>
        <end position="655"/>
    </location>
</feature>
<feature type="region of interest" description="Disordered" evidence="4">
    <location>
        <begin position="712"/>
        <end position="751"/>
    </location>
</feature>
<feature type="compositionally biased region" description="Basic and acidic residues" evidence="4">
    <location>
        <begin position="712"/>
        <end position="731"/>
    </location>
</feature>
<feature type="glycosylation site" description="N-linked (GlcNAc...) asparagine" evidence="2">
    <location>
        <position position="81"/>
    </location>
</feature>
<feature type="glycosylation site" description="N-linked (GlcNAc...) asparagine" evidence="2">
    <location>
        <position position="123"/>
    </location>
</feature>
<feature type="glycosylation site" description="N-linked (GlcNAc...) asparagine" evidence="2">
    <location>
        <position position="252"/>
    </location>
</feature>
<feature type="glycosylation site" description="N-linked (GlcNAc...) asparagine" evidence="2">
    <location>
        <position position="268"/>
    </location>
</feature>
<feature type="glycosylation site" description="N-linked (GlcNAc...) asparagine" evidence="2">
    <location>
        <position position="465"/>
    </location>
</feature>
<feature type="glycosylation site" description="N-linked (GlcNAc...) asparagine" evidence="2">
    <location>
        <position position="585"/>
    </location>
</feature>
<feature type="glycosylation site" description="N-linked (GlcNAc...) asparagine" evidence="2">
    <location>
        <position position="586"/>
    </location>
</feature>
<feature type="disulfide bond" evidence="1">
    <location>
        <begin position="101"/>
        <end position="112"/>
    </location>
</feature>
<feature type="disulfide bond" evidence="1">
    <location>
        <begin position="130"/>
        <end position="139"/>
    </location>
</feature>
<feature type="disulfide bond" evidence="1">
    <location>
        <begin position="266"/>
        <end position="378"/>
    </location>
</feature>
<feature type="disulfide bond" evidence="1">
    <location>
        <begin position="290"/>
        <end position="338"/>
    </location>
</feature>
<feature type="disulfide bond" evidence="1">
    <location>
        <begin position="514"/>
        <end position="532"/>
    </location>
</feature>
<feature type="disulfide bond" evidence="1">
    <location>
        <begin position="643"/>
        <end position="709"/>
    </location>
</feature>
<feature type="splice variant" id="VSP_055886" description="In isoform 2." evidence="5">
    <location>
        <begin position="2"/>
        <end position="149"/>
    </location>
</feature>
<feature type="splice variant" id="VSP_055887" description="In isoform 2." evidence="5">
    <original>CPGG</original>
    <variation>NTCV</variation>
    <location>
        <begin position="378"/>
        <end position="381"/>
    </location>
</feature>
<feature type="splice variant" id="VSP_055888" description="In isoform 2." evidence="5">
    <location>
        <begin position="382"/>
        <end position="751"/>
    </location>
</feature>
<feature type="sequence variant" id="VAR_051928" description="In dbSNP:rs35070362.">
    <original>F</original>
    <variation>S</variation>
    <location>
        <position position="302"/>
    </location>
</feature>
<feature type="sequence variant" id="VAR_020346" description="In dbSNP:rs1527482.">
    <original>V</original>
    <variation>M</variation>
    <location>
        <position position="337"/>
    </location>
</feature>
<keyword id="KW-0025">Alternative splicing</keyword>
<keyword id="KW-0217">Developmental protein</keyword>
<keyword id="KW-0221">Differentiation</keyword>
<keyword id="KW-1015">Disulfide bond</keyword>
<keyword id="KW-0325">Glycoprotein</keyword>
<keyword id="KW-0393">Immunoglobulin domain</keyword>
<keyword id="KW-0524">Neurogenesis</keyword>
<keyword id="KW-1267">Proteomics identification</keyword>
<keyword id="KW-1185">Reference proteome</keyword>
<keyword id="KW-0964">Secreted</keyword>
<keyword id="KW-0732">Signal</keyword>
<organism>
    <name type="scientific">Homo sapiens</name>
    <name type="common">Human</name>
    <dbReference type="NCBI Taxonomy" id="9606"/>
    <lineage>
        <taxon>Eukaryota</taxon>
        <taxon>Metazoa</taxon>
        <taxon>Chordata</taxon>
        <taxon>Craniata</taxon>
        <taxon>Vertebrata</taxon>
        <taxon>Euteleostomi</taxon>
        <taxon>Mammalia</taxon>
        <taxon>Eutheria</taxon>
        <taxon>Euarchontoglires</taxon>
        <taxon>Primates</taxon>
        <taxon>Haplorrhini</taxon>
        <taxon>Catarrhini</taxon>
        <taxon>Hominidae</taxon>
        <taxon>Homo</taxon>
    </lineage>
</organism>
<comment type="function">
    <text evidence="1">Binds to plexin family members and plays an important role in the regulation of developmental processes. Required for normal cardiovascular development during embryogenesis. Functions as attractant for growing axons, and thereby plays an important role in axon growth and axon guidance (By similarity).</text>
</comment>
<comment type="subunit">
    <text evidence="1">Interacts with PLXND1.</text>
</comment>
<comment type="interaction">
    <interactant intactId="EBI-11054756">
        <id>Q99985</id>
    </interactant>
    <interactant intactId="EBI-7289489">
        <id>Q5R3I4</id>
        <label>TTC38</label>
    </interactant>
    <organismsDiffer>false</organismsDiffer>
    <experiments>2</experiments>
</comment>
<comment type="subcellular location">
    <subcellularLocation>
        <location>Secreted</location>
    </subcellularLocation>
</comment>
<comment type="alternative products">
    <event type="alternative splicing"/>
    <isoform>
        <id>Q99985-1</id>
        <name>1</name>
        <sequence type="displayed"/>
    </isoform>
    <isoform>
        <id>Q99985-2</id>
        <name>2</name>
        <sequence type="described" ref="VSP_055886 VSP_055887 VSP_055888"/>
    </isoform>
</comment>
<comment type="tissue specificity">
    <text>Expressed intensely in the heart, skeletal muscle, colon, small intestine, ovary, testis, and prostate. Faint expression ubiquitously among other organs, including brain.</text>
</comment>
<comment type="similarity">
    <text evidence="6">Belongs to the semaphorin family.</text>
</comment>
<sequence>MAFRTICVLVGVFICSICVKGSSQPQARVYLTFDELRETKTSEYFSLSHHPLDYRILLMDEDQDRIYVGSKDHILSLNINNISQEALSVFWPASTIKVEECKMAGKDPTHGCGNFVRVIQTFNRTHLYVCGSGAFSPVCTYLNRGRRSEDQVFMIDSKCESGKGRCSFNPNVNTVSVMINEELFSGMYIDFMGTDAAIFRSLTKRNAVRTDQHNSKWLSEPMFVDAHVIPDGTDPNDAKVYFFFKEKLTDNNRSTKQIHSMIARICPNDTGGLRSLVNKWTTFLKARLVCSVTDEDGPETHFDELEDVFLLETDNPRTTLVYGIFTTSSSVFKGSAVCVYHLSDIQTVFNGPFAHKEGPNHQLISYQGRIPYPRPGTCPGGAFTPNMRTTKEFPDDVVTFIRNHPLMYNSIYPIHKRPLIVRIGTDYKYTKIAVDRVNAADGRYHVLFLGTDRGTVQKVVVLPTNNSVSGELILEELEVFKNHAPITTMKISSKKQQLYVSSNEGVSQVSLHRCHIYGTACADCCLARDPYCAWDGHSCSRFYPTGKRRSRRQDVRHGNPLTQCRGFNLKAYRNAAEIVQYGVKNNTTFLECAPKSPQASIKWLLQKDKDRRKEVKLNERIIATSQGLLIRSVQGSDQGLYHCIATENSFKQTIAKINFKVLDSEMVAVVTDKWSPWTWASSVRALPFHPKDIMGAFSHSEMQMINQYCKDTRQQHQQGDESQKMRGDYGKLKALINSRKSRNRRNQLPES</sequence>
<protein>
    <recommendedName>
        <fullName>Semaphorin-3C</fullName>
    </recommendedName>
    <alternativeName>
        <fullName>Semaphorin-E</fullName>
        <shortName>Sema E</shortName>
    </alternativeName>
</protein>
<gene>
    <name type="primary">SEMA3C</name>
    <name type="synonym">SEMAE</name>
</gene>
<reference key="1">
    <citation type="journal article" date="1997" name="Proc. Natl. Acad. Sci. U.S.A.">
        <title>Identification of semaphorin E as a non-MDR drug resistance gene of human cancers.</title>
        <authorList>
            <person name="Yamada T."/>
            <person name="Endo R."/>
            <person name="Gotoh M."/>
            <person name="Hirohashi S."/>
        </authorList>
    </citation>
    <scope>NUCLEOTIDE SEQUENCE [MRNA] (ISOFORM 1)</scope>
</reference>
<reference key="2">
    <citation type="journal article" date="2004" name="Nat. Genet.">
        <title>Complete sequencing and characterization of 21,243 full-length human cDNAs.</title>
        <authorList>
            <person name="Ota T."/>
            <person name="Suzuki Y."/>
            <person name="Nishikawa T."/>
            <person name="Otsuki T."/>
            <person name="Sugiyama T."/>
            <person name="Irie R."/>
            <person name="Wakamatsu A."/>
            <person name="Hayashi K."/>
            <person name="Sato H."/>
            <person name="Nagai K."/>
            <person name="Kimura K."/>
            <person name="Makita H."/>
            <person name="Sekine M."/>
            <person name="Obayashi M."/>
            <person name="Nishi T."/>
            <person name="Shibahara T."/>
            <person name="Tanaka T."/>
            <person name="Ishii S."/>
            <person name="Yamamoto J."/>
            <person name="Saito K."/>
            <person name="Kawai Y."/>
            <person name="Isono Y."/>
            <person name="Nakamura Y."/>
            <person name="Nagahari K."/>
            <person name="Murakami K."/>
            <person name="Yasuda T."/>
            <person name="Iwayanagi T."/>
            <person name="Wagatsuma M."/>
            <person name="Shiratori A."/>
            <person name="Sudo H."/>
            <person name="Hosoiri T."/>
            <person name="Kaku Y."/>
            <person name="Kodaira H."/>
            <person name="Kondo H."/>
            <person name="Sugawara M."/>
            <person name="Takahashi M."/>
            <person name="Kanda K."/>
            <person name="Yokoi T."/>
            <person name="Furuya T."/>
            <person name="Kikkawa E."/>
            <person name="Omura Y."/>
            <person name="Abe K."/>
            <person name="Kamihara K."/>
            <person name="Katsuta N."/>
            <person name="Sato K."/>
            <person name="Tanikawa M."/>
            <person name="Yamazaki M."/>
            <person name="Ninomiya K."/>
            <person name="Ishibashi T."/>
            <person name="Yamashita H."/>
            <person name="Murakawa K."/>
            <person name="Fujimori K."/>
            <person name="Tanai H."/>
            <person name="Kimata M."/>
            <person name="Watanabe M."/>
            <person name="Hiraoka S."/>
            <person name="Chiba Y."/>
            <person name="Ishida S."/>
            <person name="Ono Y."/>
            <person name="Takiguchi S."/>
            <person name="Watanabe S."/>
            <person name="Yosida M."/>
            <person name="Hotuta T."/>
            <person name="Kusano J."/>
            <person name="Kanehori K."/>
            <person name="Takahashi-Fujii A."/>
            <person name="Hara H."/>
            <person name="Tanase T.-O."/>
            <person name="Nomura Y."/>
            <person name="Togiya S."/>
            <person name="Komai F."/>
            <person name="Hara R."/>
            <person name="Takeuchi K."/>
            <person name="Arita M."/>
            <person name="Imose N."/>
            <person name="Musashino K."/>
            <person name="Yuuki H."/>
            <person name="Oshima A."/>
            <person name="Sasaki N."/>
            <person name="Aotsuka S."/>
            <person name="Yoshikawa Y."/>
            <person name="Matsunawa H."/>
            <person name="Ichihara T."/>
            <person name="Shiohata N."/>
            <person name="Sano S."/>
            <person name="Moriya S."/>
            <person name="Momiyama H."/>
            <person name="Satoh N."/>
            <person name="Takami S."/>
            <person name="Terashima Y."/>
            <person name="Suzuki O."/>
            <person name="Nakagawa S."/>
            <person name="Senoh A."/>
            <person name="Mizoguchi H."/>
            <person name="Goto Y."/>
            <person name="Shimizu F."/>
            <person name="Wakebe H."/>
            <person name="Hishigaki H."/>
            <person name="Watanabe T."/>
            <person name="Sugiyama A."/>
            <person name="Takemoto M."/>
            <person name="Kawakami B."/>
            <person name="Yamazaki M."/>
            <person name="Watanabe K."/>
            <person name="Kumagai A."/>
            <person name="Itakura S."/>
            <person name="Fukuzumi Y."/>
            <person name="Fujimori Y."/>
            <person name="Komiyama M."/>
            <person name="Tashiro H."/>
            <person name="Tanigami A."/>
            <person name="Fujiwara T."/>
            <person name="Ono T."/>
            <person name="Yamada K."/>
            <person name="Fujii Y."/>
            <person name="Ozaki K."/>
            <person name="Hirao M."/>
            <person name="Ohmori Y."/>
            <person name="Kawabata A."/>
            <person name="Hikiji T."/>
            <person name="Kobatake N."/>
            <person name="Inagaki H."/>
            <person name="Ikema Y."/>
            <person name="Okamoto S."/>
            <person name="Okitani R."/>
            <person name="Kawakami T."/>
            <person name="Noguchi S."/>
            <person name="Itoh T."/>
            <person name="Shigeta K."/>
            <person name="Senba T."/>
            <person name="Matsumura K."/>
            <person name="Nakajima Y."/>
            <person name="Mizuno T."/>
            <person name="Morinaga M."/>
            <person name="Sasaki M."/>
            <person name="Togashi T."/>
            <person name="Oyama M."/>
            <person name="Hata H."/>
            <person name="Watanabe M."/>
            <person name="Komatsu T."/>
            <person name="Mizushima-Sugano J."/>
            <person name="Satoh T."/>
            <person name="Shirai Y."/>
            <person name="Takahashi Y."/>
            <person name="Nakagawa K."/>
            <person name="Okumura K."/>
            <person name="Nagase T."/>
            <person name="Nomura N."/>
            <person name="Kikuchi H."/>
            <person name="Masuho Y."/>
            <person name="Yamashita R."/>
            <person name="Nakai K."/>
            <person name="Yada T."/>
            <person name="Nakamura Y."/>
            <person name="Ohara O."/>
            <person name="Isogai T."/>
            <person name="Sugano S."/>
        </authorList>
    </citation>
    <scope>NUCLEOTIDE SEQUENCE [LARGE SCALE MRNA] (ISOFORM 2)</scope>
</reference>
<reference key="3">
    <citation type="journal article" date="2003" name="Nature">
        <title>The DNA sequence of human chromosome 7.</title>
        <authorList>
            <person name="Hillier L.W."/>
            <person name="Fulton R.S."/>
            <person name="Fulton L.A."/>
            <person name="Graves T.A."/>
            <person name="Pepin K.H."/>
            <person name="Wagner-McPherson C."/>
            <person name="Layman D."/>
            <person name="Maas J."/>
            <person name="Jaeger S."/>
            <person name="Walker R."/>
            <person name="Wylie K."/>
            <person name="Sekhon M."/>
            <person name="Becker M.C."/>
            <person name="O'Laughlin M.D."/>
            <person name="Schaller M.E."/>
            <person name="Fewell G.A."/>
            <person name="Delehaunty K.D."/>
            <person name="Miner T.L."/>
            <person name="Nash W.E."/>
            <person name="Cordes M."/>
            <person name="Du H."/>
            <person name="Sun H."/>
            <person name="Edwards J."/>
            <person name="Bradshaw-Cordum H."/>
            <person name="Ali J."/>
            <person name="Andrews S."/>
            <person name="Isak A."/>
            <person name="Vanbrunt A."/>
            <person name="Nguyen C."/>
            <person name="Du F."/>
            <person name="Lamar B."/>
            <person name="Courtney L."/>
            <person name="Kalicki J."/>
            <person name="Ozersky P."/>
            <person name="Bielicki L."/>
            <person name="Scott K."/>
            <person name="Holmes A."/>
            <person name="Harkins R."/>
            <person name="Harris A."/>
            <person name="Strong C.M."/>
            <person name="Hou S."/>
            <person name="Tomlinson C."/>
            <person name="Dauphin-Kohlberg S."/>
            <person name="Kozlowicz-Reilly A."/>
            <person name="Leonard S."/>
            <person name="Rohlfing T."/>
            <person name="Rock S.M."/>
            <person name="Tin-Wollam A.-M."/>
            <person name="Abbott A."/>
            <person name="Minx P."/>
            <person name="Maupin R."/>
            <person name="Strowmatt C."/>
            <person name="Latreille P."/>
            <person name="Miller N."/>
            <person name="Johnson D."/>
            <person name="Murray J."/>
            <person name="Woessner J.P."/>
            <person name="Wendl M.C."/>
            <person name="Yang S.-P."/>
            <person name="Schultz B.R."/>
            <person name="Wallis J.W."/>
            <person name="Spieth J."/>
            <person name="Bieri T.A."/>
            <person name="Nelson J.O."/>
            <person name="Berkowicz N."/>
            <person name="Wohldmann P.E."/>
            <person name="Cook L.L."/>
            <person name="Hickenbotham M.T."/>
            <person name="Eldred J."/>
            <person name="Williams D."/>
            <person name="Bedell J.A."/>
            <person name="Mardis E.R."/>
            <person name="Clifton S.W."/>
            <person name="Chissoe S.L."/>
            <person name="Marra M.A."/>
            <person name="Raymond C."/>
            <person name="Haugen E."/>
            <person name="Gillett W."/>
            <person name="Zhou Y."/>
            <person name="James R."/>
            <person name="Phelps K."/>
            <person name="Iadanoto S."/>
            <person name="Bubb K."/>
            <person name="Simms E."/>
            <person name="Levy R."/>
            <person name="Clendenning J."/>
            <person name="Kaul R."/>
            <person name="Kent W.J."/>
            <person name="Furey T.S."/>
            <person name="Baertsch R.A."/>
            <person name="Brent M.R."/>
            <person name="Keibler E."/>
            <person name="Flicek P."/>
            <person name="Bork P."/>
            <person name="Suyama M."/>
            <person name="Bailey J.A."/>
            <person name="Portnoy M.E."/>
            <person name="Torrents D."/>
            <person name="Chinwalla A.T."/>
            <person name="Gish W.R."/>
            <person name="Eddy S.R."/>
            <person name="McPherson J.D."/>
            <person name="Olson M.V."/>
            <person name="Eichler E.E."/>
            <person name="Green E.D."/>
            <person name="Waterston R.H."/>
            <person name="Wilson R.K."/>
        </authorList>
    </citation>
    <scope>NUCLEOTIDE SEQUENCE [LARGE SCALE GENOMIC DNA]</scope>
</reference>
<reference key="4">
    <citation type="journal article" date="2004" name="Genome Res.">
        <title>The status, quality, and expansion of the NIH full-length cDNA project: the Mammalian Gene Collection (MGC).</title>
        <authorList>
            <consortium name="The MGC Project Team"/>
        </authorList>
    </citation>
    <scope>NUCLEOTIDE SEQUENCE [LARGE SCALE MRNA] (ISOFORM 1)</scope>
    <source>
        <tissue>Testis</tissue>
    </source>
</reference>
<dbReference type="EMBL" id="AB000220">
    <property type="protein sequence ID" value="BAA32398.1"/>
    <property type="molecule type" value="mRNA"/>
</dbReference>
<dbReference type="EMBL" id="AK299322">
    <property type="protein sequence ID" value="BAG61330.1"/>
    <property type="molecule type" value="mRNA"/>
</dbReference>
<dbReference type="EMBL" id="AC004880">
    <property type="status" value="NOT_ANNOTATED_CDS"/>
    <property type="molecule type" value="Genomic_DNA"/>
</dbReference>
<dbReference type="EMBL" id="AC004972">
    <property type="status" value="NOT_ANNOTATED_CDS"/>
    <property type="molecule type" value="Genomic_DNA"/>
</dbReference>
<dbReference type="EMBL" id="AC073850">
    <property type="status" value="NOT_ANNOTATED_CDS"/>
    <property type="molecule type" value="Genomic_DNA"/>
</dbReference>
<dbReference type="EMBL" id="AC093683">
    <property type="status" value="NOT_ANNOTATED_CDS"/>
    <property type="molecule type" value="Genomic_DNA"/>
</dbReference>
<dbReference type="EMBL" id="BC030690">
    <property type="protein sequence ID" value="AAH30690.1"/>
    <property type="molecule type" value="mRNA"/>
</dbReference>
<dbReference type="CCDS" id="CCDS5596.1">
    <molecule id="Q99985-1"/>
</dbReference>
<dbReference type="RefSeq" id="NP_006370.1">
    <molecule id="Q99985-1"/>
    <property type="nucleotide sequence ID" value="NM_006379.5"/>
</dbReference>
<dbReference type="SMR" id="Q99985"/>
<dbReference type="BioGRID" id="115768">
    <property type="interactions" value="72"/>
</dbReference>
<dbReference type="CORUM" id="Q99985"/>
<dbReference type="FunCoup" id="Q99985">
    <property type="interactions" value="383"/>
</dbReference>
<dbReference type="IntAct" id="Q99985">
    <property type="interactions" value="39"/>
</dbReference>
<dbReference type="STRING" id="9606.ENSP00000265361"/>
<dbReference type="GlyConnect" id="1730">
    <property type="glycosylation" value="2 N-Linked glycans (2 sites)"/>
</dbReference>
<dbReference type="GlyCosmos" id="Q99985">
    <property type="glycosylation" value="7 sites, 2 glycans"/>
</dbReference>
<dbReference type="GlyGen" id="Q99985">
    <property type="glycosylation" value="8 sites, 9 N-linked glycans (4 sites), 1 O-linked glycan (1 site)"/>
</dbReference>
<dbReference type="iPTMnet" id="Q99985"/>
<dbReference type="PhosphoSitePlus" id="Q99985"/>
<dbReference type="BioMuta" id="SEMA3C"/>
<dbReference type="DMDM" id="8134685"/>
<dbReference type="jPOST" id="Q99985"/>
<dbReference type="MassIVE" id="Q99985"/>
<dbReference type="PaxDb" id="9606-ENSP00000265361"/>
<dbReference type="PeptideAtlas" id="Q99985"/>
<dbReference type="ProteomicsDB" id="4959"/>
<dbReference type="ProteomicsDB" id="78562">
    <molecule id="Q99985-1"/>
</dbReference>
<dbReference type="Pumba" id="Q99985"/>
<dbReference type="Antibodypedia" id="48987">
    <property type="antibodies" value="268 antibodies from 27 providers"/>
</dbReference>
<dbReference type="DNASU" id="10512"/>
<dbReference type="Ensembl" id="ENST00000265361.8">
    <molecule id="Q99985-1"/>
    <property type="protein sequence ID" value="ENSP00000265361.3"/>
    <property type="gene ID" value="ENSG00000075223.14"/>
</dbReference>
<dbReference type="Ensembl" id="ENST00000419255.6">
    <molecule id="Q99985-1"/>
    <property type="protein sequence ID" value="ENSP00000411193.2"/>
    <property type="gene ID" value="ENSG00000075223.14"/>
</dbReference>
<dbReference type="GeneID" id="10512"/>
<dbReference type="KEGG" id="hsa:10512"/>
<dbReference type="MANE-Select" id="ENST00000265361.8">
    <property type="protein sequence ID" value="ENSP00000265361.3"/>
    <property type="RefSeq nucleotide sequence ID" value="NM_006379.5"/>
    <property type="RefSeq protein sequence ID" value="NP_006370.1"/>
</dbReference>
<dbReference type="UCSC" id="uc003uhj.3">
    <molecule id="Q99985-1"/>
    <property type="organism name" value="human"/>
</dbReference>
<dbReference type="AGR" id="HGNC:10725"/>
<dbReference type="CTD" id="10512"/>
<dbReference type="DisGeNET" id="10512"/>
<dbReference type="GeneCards" id="SEMA3C"/>
<dbReference type="HGNC" id="HGNC:10725">
    <property type="gene designation" value="SEMA3C"/>
</dbReference>
<dbReference type="HPA" id="ENSG00000075223">
    <property type="expression patterns" value="Low tissue specificity"/>
</dbReference>
<dbReference type="MalaCards" id="SEMA3C"/>
<dbReference type="MIM" id="602645">
    <property type="type" value="gene"/>
</dbReference>
<dbReference type="neXtProt" id="NX_Q99985"/>
<dbReference type="OpenTargets" id="ENSG00000075223"/>
<dbReference type="Orphanet" id="388">
    <property type="disease" value="Hirschsprung disease"/>
</dbReference>
<dbReference type="PharmGKB" id="PA35647"/>
<dbReference type="VEuPathDB" id="HostDB:ENSG00000075223"/>
<dbReference type="eggNOG" id="KOG3611">
    <property type="taxonomic scope" value="Eukaryota"/>
</dbReference>
<dbReference type="GeneTree" id="ENSGT00940000159379"/>
<dbReference type="HOGENOM" id="CLU_009051_5_0_1"/>
<dbReference type="InParanoid" id="Q99985"/>
<dbReference type="OMA" id="AMYIDFM"/>
<dbReference type="OrthoDB" id="9988752at2759"/>
<dbReference type="PAN-GO" id="Q99985">
    <property type="GO annotations" value="10 GO annotations based on evolutionary models"/>
</dbReference>
<dbReference type="PhylomeDB" id="Q99985"/>
<dbReference type="TreeFam" id="TF352628"/>
<dbReference type="PathwayCommons" id="Q99985"/>
<dbReference type="SignaLink" id="Q99985"/>
<dbReference type="SIGNOR" id="Q99985"/>
<dbReference type="BioGRID-ORCS" id="10512">
    <property type="hits" value="15 hits in 1152 CRISPR screens"/>
</dbReference>
<dbReference type="ChiTaRS" id="SEMA3C">
    <property type="organism name" value="human"/>
</dbReference>
<dbReference type="GeneWiki" id="SEMA3C"/>
<dbReference type="GenomeRNAi" id="10512"/>
<dbReference type="Pharos" id="Q99985">
    <property type="development level" value="Tbio"/>
</dbReference>
<dbReference type="PRO" id="PR:Q99985"/>
<dbReference type="Proteomes" id="UP000005640">
    <property type="component" value="Chromosome 7"/>
</dbReference>
<dbReference type="RNAct" id="Q99985">
    <property type="molecule type" value="protein"/>
</dbReference>
<dbReference type="Bgee" id="ENSG00000075223">
    <property type="expression patterns" value="Expressed in mammary duct and 204 other cell types or tissues"/>
</dbReference>
<dbReference type="ExpressionAtlas" id="Q99985">
    <property type="expression patterns" value="baseline and differential"/>
</dbReference>
<dbReference type="GO" id="GO:0070062">
    <property type="term" value="C:extracellular exosome"/>
    <property type="evidence" value="ECO:0007005"/>
    <property type="project" value="UniProtKB"/>
</dbReference>
<dbReference type="GO" id="GO:0005615">
    <property type="term" value="C:extracellular space"/>
    <property type="evidence" value="ECO:0000318"/>
    <property type="project" value="GO_Central"/>
</dbReference>
<dbReference type="GO" id="GO:0005886">
    <property type="term" value="C:plasma membrane"/>
    <property type="evidence" value="ECO:0000318"/>
    <property type="project" value="GO_Central"/>
</dbReference>
<dbReference type="GO" id="GO:0045499">
    <property type="term" value="F:chemorepellent activity"/>
    <property type="evidence" value="ECO:0000318"/>
    <property type="project" value="GO_Central"/>
</dbReference>
<dbReference type="GO" id="GO:0038191">
    <property type="term" value="F:neuropilin binding"/>
    <property type="evidence" value="ECO:0000318"/>
    <property type="project" value="GO_Central"/>
</dbReference>
<dbReference type="GO" id="GO:0030215">
    <property type="term" value="F:semaphorin receptor binding"/>
    <property type="evidence" value="ECO:0000318"/>
    <property type="project" value="GO_Central"/>
</dbReference>
<dbReference type="GO" id="GO:0007411">
    <property type="term" value="P:axon guidance"/>
    <property type="evidence" value="ECO:0000250"/>
    <property type="project" value="UniProtKB"/>
</dbReference>
<dbReference type="GO" id="GO:0001974">
    <property type="term" value="P:blood vessel remodeling"/>
    <property type="evidence" value="ECO:0007669"/>
    <property type="project" value="Ensembl"/>
</dbReference>
<dbReference type="GO" id="GO:0140074">
    <property type="term" value="P:cardiac endothelial to mesenchymal transition"/>
    <property type="evidence" value="ECO:0000250"/>
    <property type="project" value="BHF-UCL"/>
</dbReference>
<dbReference type="GO" id="GO:0003215">
    <property type="term" value="P:cardiac right ventricle morphogenesis"/>
    <property type="evidence" value="ECO:0007669"/>
    <property type="project" value="Ensembl"/>
</dbReference>
<dbReference type="GO" id="GO:0060666">
    <property type="term" value="P:dichotomous subdivision of terminal units involved in salivary gland branching"/>
    <property type="evidence" value="ECO:0007669"/>
    <property type="project" value="Ensembl"/>
</dbReference>
<dbReference type="GO" id="GO:0006955">
    <property type="term" value="P:immune response"/>
    <property type="evidence" value="ECO:0000304"/>
    <property type="project" value="ProtInc"/>
</dbReference>
<dbReference type="GO" id="GO:0060174">
    <property type="term" value="P:limb bud formation"/>
    <property type="evidence" value="ECO:0007669"/>
    <property type="project" value="Ensembl"/>
</dbReference>
<dbReference type="GO" id="GO:0050919">
    <property type="term" value="P:negative chemotaxis"/>
    <property type="evidence" value="ECO:0000318"/>
    <property type="project" value="GO_Central"/>
</dbReference>
<dbReference type="GO" id="GO:0001755">
    <property type="term" value="P:neural crest cell migration"/>
    <property type="evidence" value="ECO:0000318"/>
    <property type="project" value="GO_Central"/>
</dbReference>
<dbReference type="GO" id="GO:0021915">
    <property type="term" value="P:neural tube development"/>
    <property type="evidence" value="ECO:0007669"/>
    <property type="project" value="Ensembl"/>
</dbReference>
<dbReference type="GO" id="GO:0003148">
    <property type="term" value="P:outflow tract septum morphogenesis"/>
    <property type="evidence" value="ECO:0000250"/>
    <property type="project" value="BHF-UCL"/>
</dbReference>
<dbReference type="GO" id="GO:1905312">
    <property type="term" value="P:positive regulation of cardiac neural crest cell migration involved in outflow tract morphogenesis"/>
    <property type="evidence" value="ECO:0000250"/>
    <property type="project" value="BHF-UCL"/>
</dbReference>
<dbReference type="GO" id="GO:0030335">
    <property type="term" value="P:positive regulation of cell migration"/>
    <property type="evidence" value="ECO:0000318"/>
    <property type="project" value="GO_Central"/>
</dbReference>
<dbReference type="GO" id="GO:0009791">
    <property type="term" value="P:post-embryonic development"/>
    <property type="evidence" value="ECO:0007669"/>
    <property type="project" value="Ensembl"/>
</dbReference>
<dbReference type="GO" id="GO:0003350">
    <property type="term" value="P:pulmonary myocardium development"/>
    <property type="evidence" value="ECO:0007669"/>
    <property type="project" value="Ensembl"/>
</dbReference>
<dbReference type="GO" id="GO:0009410">
    <property type="term" value="P:response to xenobiotic stimulus"/>
    <property type="evidence" value="ECO:0000304"/>
    <property type="project" value="ProtInc"/>
</dbReference>
<dbReference type="GO" id="GO:0071526">
    <property type="term" value="P:semaphorin-plexin signaling pathway"/>
    <property type="evidence" value="ECO:0000250"/>
    <property type="project" value="BHF-UCL"/>
</dbReference>
<dbReference type="GO" id="GO:0001756">
    <property type="term" value="P:somitogenesis"/>
    <property type="evidence" value="ECO:0007669"/>
    <property type="project" value="Ensembl"/>
</dbReference>
<dbReference type="CDD" id="cd05871">
    <property type="entry name" value="Ig_Sema3"/>
    <property type="match status" value="1"/>
</dbReference>
<dbReference type="CDD" id="cd11251">
    <property type="entry name" value="Sema_3C"/>
    <property type="match status" value="1"/>
</dbReference>
<dbReference type="FunFam" id="2.130.10.10:FF:000123">
    <property type="entry name" value="Semaphorin 3C"/>
    <property type="match status" value="1"/>
</dbReference>
<dbReference type="FunFam" id="2.60.40.10:FF:000030">
    <property type="entry name" value="Semaphorin 3F like"/>
    <property type="match status" value="1"/>
</dbReference>
<dbReference type="FunFam" id="3.30.1680.10:FF:000001">
    <property type="entry name" value="Semaphorin 3F like"/>
    <property type="match status" value="1"/>
</dbReference>
<dbReference type="Gene3D" id="2.60.40.10">
    <property type="entry name" value="Immunoglobulins"/>
    <property type="match status" value="1"/>
</dbReference>
<dbReference type="Gene3D" id="3.30.1680.10">
    <property type="entry name" value="ligand-binding face of the semaphorins, domain 2"/>
    <property type="match status" value="1"/>
</dbReference>
<dbReference type="Gene3D" id="2.130.10.10">
    <property type="entry name" value="YVTN repeat-like/Quinoprotein amine dehydrogenase"/>
    <property type="match status" value="1"/>
</dbReference>
<dbReference type="InterPro" id="IPR007110">
    <property type="entry name" value="Ig-like_dom"/>
</dbReference>
<dbReference type="InterPro" id="IPR036179">
    <property type="entry name" value="Ig-like_dom_sf"/>
</dbReference>
<dbReference type="InterPro" id="IPR013783">
    <property type="entry name" value="Ig-like_fold"/>
</dbReference>
<dbReference type="InterPro" id="IPR013098">
    <property type="entry name" value="Ig_I-set"/>
</dbReference>
<dbReference type="InterPro" id="IPR003599">
    <property type="entry name" value="Ig_sub"/>
</dbReference>
<dbReference type="InterPro" id="IPR016201">
    <property type="entry name" value="PSI"/>
</dbReference>
<dbReference type="InterPro" id="IPR001627">
    <property type="entry name" value="Semap_dom"/>
</dbReference>
<dbReference type="InterPro" id="IPR036352">
    <property type="entry name" value="Semap_dom_sf"/>
</dbReference>
<dbReference type="InterPro" id="IPR027231">
    <property type="entry name" value="Semaphorin"/>
</dbReference>
<dbReference type="InterPro" id="IPR015943">
    <property type="entry name" value="WD40/YVTN_repeat-like_dom_sf"/>
</dbReference>
<dbReference type="PANTHER" id="PTHR11036">
    <property type="entry name" value="SEMAPHORIN"/>
    <property type="match status" value="1"/>
</dbReference>
<dbReference type="PANTHER" id="PTHR11036:SF25">
    <property type="entry name" value="SEMAPHORIN-3C"/>
    <property type="match status" value="1"/>
</dbReference>
<dbReference type="Pfam" id="PF07679">
    <property type="entry name" value="I-set"/>
    <property type="match status" value="1"/>
</dbReference>
<dbReference type="Pfam" id="PF01403">
    <property type="entry name" value="Sema"/>
    <property type="match status" value="1"/>
</dbReference>
<dbReference type="SMART" id="SM00409">
    <property type="entry name" value="IG"/>
    <property type="match status" value="1"/>
</dbReference>
<dbReference type="SMART" id="SM00423">
    <property type="entry name" value="PSI"/>
    <property type="match status" value="1"/>
</dbReference>
<dbReference type="SMART" id="SM00630">
    <property type="entry name" value="Sema"/>
    <property type="match status" value="1"/>
</dbReference>
<dbReference type="SUPFAM" id="SSF48726">
    <property type="entry name" value="Immunoglobulin"/>
    <property type="match status" value="1"/>
</dbReference>
<dbReference type="SUPFAM" id="SSF103575">
    <property type="entry name" value="Plexin repeat"/>
    <property type="match status" value="1"/>
</dbReference>
<dbReference type="SUPFAM" id="SSF101912">
    <property type="entry name" value="Sema domain"/>
    <property type="match status" value="1"/>
</dbReference>
<dbReference type="PROSITE" id="PS50835">
    <property type="entry name" value="IG_LIKE"/>
    <property type="match status" value="1"/>
</dbReference>
<dbReference type="PROSITE" id="PS51004">
    <property type="entry name" value="SEMA"/>
    <property type="match status" value="1"/>
</dbReference>
<accession>Q99985</accession>
<accession>B4DRL8</accession>
<name>SEM3C_HUMAN</name>